<reference key="1">
    <citation type="submission" date="2018-02" db="EMBL/GenBank/DDBJ databases">
        <title>The 200 mammals project: sequencing genomes by a novel cost-effective method, yielding a high resolution annotation of the human genome.</title>
        <authorList>
            <person name="Johnson J."/>
            <person name="Muren E."/>
            <person name="Swofford R."/>
            <person name="Turner-Maier J."/>
            <person name="Marinescu V.D."/>
            <person name="Genereux D.P."/>
            <person name="Alfoldi J."/>
            <person name="Birren B."/>
            <person name="Karlsson E.K."/>
            <person name="Lindblad-Toh K."/>
        </authorList>
    </citation>
    <scope>NUCLEOTIDE SEQUENCE [LARGE SCALE GENOMIC DNA]</scope>
</reference>
<reference key="2">
    <citation type="unpublished observations" date="2021-03">
        <authorList>
            <person name="Puppione D.L."/>
        </authorList>
    </citation>
    <scope>IDENTIFICATION</scope>
</reference>
<evidence type="ECO:0000250" key="1">
    <source>
        <dbReference type="UniProtKB" id="P02655"/>
    </source>
</evidence>
<evidence type="ECO:0000250" key="2">
    <source>
        <dbReference type="UniProtKB" id="P18658"/>
    </source>
</evidence>
<evidence type="ECO:0000305" key="3"/>
<keyword id="KW-0162">Chylomicron</keyword>
<keyword id="KW-0325">Glycoprotein</keyword>
<keyword id="KW-0345">HDL</keyword>
<keyword id="KW-0427">LDL</keyword>
<keyword id="KW-0442">Lipid degradation</keyword>
<keyword id="KW-0443">Lipid metabolism</keyword>
<keyword id="KW-0445">Lipid transport</keyword>
<keyword id="KW-0964">Secreted</keyword>
<keyword id="KW-0730">Sialic acid</keyword>
<keyword id="KW-0732">Signal</keyword>
<keyword id="KW-0813">Transport</keyword>
<keyword id="KW-0850">VLDL</keyword>
<organism>
    <name type="scientific">Tapirus indicus</name>
    <name type="common">Asiatic tapir</name>
    <name type="synonym">Malayan tapir</name>
    <dbReference type="NCBI Taxonomy" id="9802"/>
    <lineage>
        <taxon>Eukaryota</taxon>
        <taxon>Metazoa</taxon>
        <taxon>Chordata</taxon>
        <taxon>Craniata</taxon>
        <taxon>Vertebrata</taxon>
        <taxon>Euteleostomi</taxon>
        <taxon>Mammalia</taxon>
        <taxon>Eutheria</taxon>
        <taxon>Laurasiatheria</taxon>
        <taxon>Perissodactyla</taxon>
        <taxon>Tapiridae</taxon>
        <taxon>Tapirus</taxon>
    </lineage>
</organism>
<gene>
    <name type="primary">APOC2</name>
</gene>
<accession>P0DUP3</accession>
<dbReference type="EMBL" id="PVIE01006448">
    <property type="status" value="NOT_ANNOTATED_CDS"/>
    <property type="molecule type" value="Genomic_DNA"/>
</dbReference>
<dbReference type="SMR" id="P0DUP3"/>
<dbReference type="GO" id="GO:0042627">
    <property type="term" value="C:chylomicron"/>
    <property type="evidence" value="ECO:0007669"/>
    <property type="project" value="UniProtKB-KW"/>
</dbReference>
<dbReference type="GO" id="GO:0034364">
    <property type="term" value="C:high-density lipoprotein particle"/>
    <property type="evidence" value="ECO:0007669"/>
    <property type="project" value="UniProtKB-KW"/>
</dbReference>
<dbReference type="GO" id="GO:0034362">
    <property type="term" value="C:low-density lipoprotein particle"/>
    <property type="evidence" value="ECO:0007669"/>
    <property type="project" value="UniProtKB-KW"/>
</dbReference>
<dbReference type="GO" id="GO:0034361">
    <property type="term" value="C:very-low-density lipoprotein particle"/>
    <property type="evidence" value="ECO:0007669"/>
    <property type="project" value="UniProtKB-KW"/>
</dbReference>
<dbReference type="GO" id="GO:0016004">
    <property type="term" value="F:phospholipase activator activity"/>
    <property type="evidence" value="ECO:0007669"/>
    <property type="project" value="TreeGrafter"/>
</dbReference>
<dbReference type="GO" id="GO:0043274">
    <property type="term" value="F:phospholipase binding"/>
    <property type="evidence" value="ECO:0007669"/>
    <property type="project" value="TreeGrafter"/>
</dbReference>
<dbReference type="GO" id="GO:0016042">
    <property type="term" value="P:lipid catabolic process"/>
    <property type="evidence" value="ECO:0007669"/>
    <property type="project" value="UniProtKB-KW"/>
</dbReference>
<dbReference type="GO" id="GO:0006869">
    <property type="term" value="P:lipid transport"/>
    <property type="evidence" value="ECO:0007669"/>
    <property type="project" value="UniProtKB-KW"/>
</dbReference>
<dbReference type="GO" id="GO:0060697">
    <property type="term" value="P:positive regulation of phospholipid catabolic process"/>
    <property type="evidence" value="ECO:0007669"/>
    <property type="project" value="TreeGrafter"/>
</dbReference>
<dbReference type="FunFam" id="1.10.1440.10:FF:000001">
    <property type="entry name" value="Apolipoprotein C-II"/>
    <property type="match status" value="1"/>
</dbReference>
<dbReference type="Gene3D" id="1.10.1440.10">
    <property type="entry name" value="Apolipoprotein C-II"/>
    <property type="match status" value="1"/>
</dbReference>
<dbReference type="InterPro" id="IPR008019">
    <property type="entry name" value="Apo-CII"/>
</dbReference>
<dbReference type="InterPro" id="IPR023121">
    <property type="entry name" value="ApoC-II_dom_sf"/>
</dbReference>
<dbReference type="PANTHER" id="PTHR16566">
    <property type="entry name" value="APOLIPOPROTEIN C-II"/>
    <property type="match status" value="1"/>
</dbReference>
<dbReference type="PANTHER" id="PTHR16566:SF0">
    <property type="entry name" value="APOLIPOPROTEIN C-II"/>
    <property type="match status" value="1"/>
</dbReference>
<dbReference type="Pfam" id="PF05355">
    <property type="entry name" value="Apo-CII"/>
    <property type="match status" value="1"/>
</dbReference>
<protein>
    <recommendedName>
        <fullName>Apolipoprotein C-II</fullName>
        <shortName>Apo-CII</shortName>
        <shortName>ApoC-II</shortName>
    </recommendedName>
    <alternativeName>
        <fullName>Apolipoprotein C2</fullName>
    </alternativeName>
    <component>
        <recommendedName>
            <fullName>Proapolipoprotein C-II</fullName>
            <shortName>ProapoC-II</shortName>
        </recommendedName>
    </component>
</protein>
<proteinExistence type="inferred from homology"/>
<comment type="function">
    <text evidence="1">Component of chylomicrons, very low-density lipoproteins (VLDL), low-density lipoproteins (LDL), and high-density lipoproteins (HDL) in plasma. Plays an important role in lipoprotein metabolism as an activator of lipoprotein lipase. Both proapolipoprotein C-II and apolipoprotein C-II can activate lipoprotein lipase.</text>
</comment>
<comment type="subcellular location">
    <subcellularLocation>
        <location evidence="1">Secreted</location>
    </subcellularLocation>
</comment>
<comment type="PTM">
    <text evidence="1">Proapolipoprotein C-II is synthesized as a sialic acid containing glycoprotein which is subsequently desialylated prior to its proteolytic processing.</text>
</comment>
<comment type="PTM">
    <text evidence="1">Proapolipoprotein C-II, the major form found in plasma undergoes proteolytic cleavage of its N-terminal hexapeptide to generate apolipoprotein C-II, which occurs as the minor form in plasma.</text>
</comment>
<comment type="similarity">
    <text evidence="3">Belongs to the apolipoprotein C2 family.</text>
</comment>
<sequence>MGARHLLALLLVLLVLGFEVQGAQVPQQDEAANTTLLTQVQESLLSYWDSTKAAAQDLYKKTYLTTMDEKIRDMFSKSTAAVSTYVGIFTDQLLSLLKGDE</sequence>
<feature type="signal peptide" evidence="2">
    <location>
        <begin position="1"/>
        <end position="22"/>
    </location>
</feature>
<feature type="chain" id="PRO_0000452904" description="Proapolipoprotein C-II">
    <location>
        <begin position="23"/>
        <end position="101"/>
    </location>
</feature>
<feature type="chain" id="PRO_0000452905" description="Apolipoprotein C-II" evidence="1">
    <location>
        <begin position="29"/>
        <end position="101"/>
    </location>
</feature>
<feature type="region of interest" description="Lipid binding" evidence="1">
    <location>
        <begin position="66"/>
        <end position="74"/>
    </location>
</feature>
<feature type="region of interest" description="Lipoprotein lipase cofactor" evidence="1">
    <location>
        <begin position="78"/>
        <end position="101"/>
    </location>
</feature>
<name>APOC2_TAPIN</name>